<reference key="1">
    <citation type="journal article" date="2004" name="Proc. Natl. Acad. Sci. U.S.A.">
        <title>Genome sequence of the enterobacterial phytopathogen Erwinia carotovora subsp. atroseptica and characterization of virulence factors.</title>
        <authorList>
            <person name="Bell K.S."/>
            <person name="Sebaihia M."/>
            <person name="Pritchard L."/>
            <person name="Holden M.T.G."/>
            <person name="Hyman L.J."/>
            <person name="Holeva M.C."/>
            <person name="Thomson N.R."/>
            <person name="Bentley S.D."/>
            <person name="Churcher L.J.C."/>
            <person name="Mungall K."/>
            <person name="Atkin R."/>
            <person name="Bason N."/>
            <person name="Brooks K."/>
            <person name="Chillingworth T."/>
            <person name="Clark K."/>
            <person name="Doggett J."/>
            <person name="Fraser A."/>
            <person name="Hance Z."/>
            <person name="Hauser H."/>
            <person name="Jagels K."/>
            <person name="Moule S."/>
            <person name="Norbertczak H."/>
            <person name="Ormond D."/>
            <person name="Price C."/>
            <person name="Quail M.A."/>
            <person name="Sanders M."/>
            <person name="Walker D."/>
            <person name="Whitehead S."/>
            <person name="Salmond G.P.C."/>
            <person name="Birch P.R.J."/>
            <person name="Parkhill J."/>
            <person name="Toth I.K."/>
        </authorList>
    </citation>
    <scope>NUCLEOTIDE SEQUENCE [LARGE SCALE GENOMIC DNA]</scope>
    <source>
        <strain>SCRI 1043 / ATCC BAA-672</strain>
    </source>
</reference>
<accession>Q6D9Z3</accession>
<dbReference type="EMBL" id="BX950851">
    <property type="protein sequence ID" value="CAG73385.1"/>
    <property type="molecule type" value="Genomic_DNA"/>
</dbReference>
<dbReference type="RefSeq" id="WP_003019081.1">
    <property type="nucleotide sequence ID" value="NC_004547.2"/>
</dbReference>
<dbReference type="STRING" id="218491.ECA0470"/>
<dbReference type="KEGG" id="eca:ECA0470"/>
<dbReference type="eggNOG" id="COG5487">
    <property type="taxonomic scope" value="Bacteria"/>
</dbReference>
<dbReference type="HOGENOM" id="CLU_187346_2_0_6"/>
<dbReference type="Proteomes" id="UP000007966">
    <property type="component" value="Chromosome"/>
</dbReference>
<dbReference type="GO" id="GO:0005886">
    <property type="term" value="C:plasma membrane"/>
    <property type="evidence" value="ECO:0007669"/>
    <property type="project" value="UniProtKB-SubCell"/>
</dbReference>
<dbReference type="HAMAP" id="MF_01361">
    <property type="entry name" value="UPF0391"/>
    <property type="match status" value="1"/>
</dbReference>
<dbReference type="InterPro" id="IPR009760">
    <property type="entry name" value="DUF1328"/>
</dbReference>
<dbReference type="NCBIfam" id="NF010229">
    <property type="entry name" value="PRK13682.1-4"/>
    <property type="match status" value="1"/>
</dbReference>
<dbReference type="NCBIfam" id="NF010230">
    <property type="entry name" value="PRK13682.1-5"/>
    <property type="match status" value="1"/>
</dbReference>
<dbReference type="Pfam" id="PF07043">
    <property type="entry name" value="DUF1328"/>
    <property type="match status" value="1"/>
</dbReference>
<dbReference type="PIRSF" id="PIRSF036466">
    <property type="entry name" value="UCP036466"/>
    <property type="match status" value="1"/>
</dbReference>
<protein>
    <recommendedName>
        <fullName evidence="1">UPF0391 membrane protein ECA0470</fullName>
    </recommendedName>
</protein>
<feature type="chain" id="PRO_0000256732" description="UPF0391 membrane protein ECA0470">
    <location>
        <begin position="1"/>
        <end position="53"/>
    </location>
</feature>
<feature type="transmembrane region" description="Helical" evidence="1">
    <location>
        <begin position="4"/>
        <end position="24"/>
    </location>
</feature>
<feature type="transmembrane region" description="Helical" evidence="1">
    <location>
        <begin position="30"/>
        <end position="47"/>
    </location>
</feature>
<proteinExistence type="inferred from homology"/>
<organism>
    <name type="scientific">Pectobacterium atrosepticum (strain SCRI 1043 / ATCC BAA-672)</name>
    <name type="common">Erwinia carotovora subsp. atroseptica</name>
    <dbReference type="NCBI Taxonomy" id="218491"/>
    <lineage>
        <taxon>Bacteria</taxon>
        <taxon>Pseudomonadati</taxon>
        <taxon>Pseudomonadota</taxon>
        <taxon>Gammaproteobacteria</taxon>
        <taxon>Enterobacterales</taxon>
        <taxon>Pectobacteriaceae</taxon>
        <taxon>Pectobacterium</taxon>
    </lineage>
</organism>
<gene>
    <name type="ordered locus">ECA0470</name>
</gene>
<name>Y470_PECAS</name>
<sequence>MFRWGIIFLVIALIAAALGFGGLAGTAAGAAKIVFVVGIILFLVSLFTGRKRP</sequence>
<keyword id="KW-1003">Cell membrane</keyword>
<keyword id="KW-0472">Membrane</keyword>
<keyword id="KW-1185">Reference proteome</keyword>
<keyword id="KW-0812">Transmembrane</keyword>
<keyword id="KW-1133">Transmembrane helix</keyword>
<comment type="subcellular location">
    <subcellularLocation>
        <location evidence="1">Cell membrane</location>
        <topology evidence="1">Multi-pass membrane protein</topology>
    </subcellularLocation>
</comment>
<comment type="similarity">
    <text evidence="1">Belongs to the UPF0391 family.</text>
</comment>
<evidence type="ECO:0000255" key="1">
    <source>
        <dbReference type="HAMAP-Rule" id="MF_01361"/>
    </source>
</evidence>